<proteinExistence type="inferred from homology"/>
<feature type="chain" id="PRO_0000145433" description="DNA topoisomerase 4 subunit B">
    <location>
        <begin position="1"/>
        <end position="635"/>
    </location>
</feature>
<feature type="domain" description="Toprim" evidence="1">
    <location>
        <begin position="422"/>
        <end position="537"/>
    </location>
</feature>
<feature type="binding site" evidence="1">
    <location>
        <position position="5"/>
    </location>
    <ligand>
        <name>ATP</name>
        <dbReference type="ChEBI" id="CHEBI:30616"/>
    </ligand>
</feature>
<feature type="binding site" evidence="1">
    <location>
        <position position="45"/>
    </location>
    <ligand>
        <name>ATP</name>
        <dbReference type="ChEBI" id="CHEBI:30616"/>
    </ligand>
</feature>
<feature type="binding site" evidence="1">
    <location>
        <position position="72"/>
    </location>
    <ligand>
        <name>ATP</name>
        <dbReference type="ChEBI" id="CHEBI:30616"/>
    </ligand>
</feature>
<feature type="binding site" evidence="1">
    <location>
        <begin position="113"/>
        <end position="119"/>
    </location>
    <ligand>
        <name>ATP</name>
        <dbReference type="ChEBI" id="CHEBI:30616"/>
    </ligand>
</feature>
<feature type="binding site" evidence="1">
    <location>
        <position position="340"/>
    </location>
    <ligand>
        <name>ATP</name>
        <dbReference type="ChEBI" id="CHEBI:30616"/>
    </ligand>
</feature>
<feature type="binding site" evidence="1">
    <location>
        <position position="428"/>
    </location>
    <ligand>
        <name>Mg(2+)</name>
        <dbReference type="ChEBI" id="CHEBI:18420"/>
        <label>1</label>
        <note>catalytic</note>
    </ligand>
</feature>
<feature type="binding site" evidence="1">
    <location>
        <position position="502"/>
    </location>
    <ligand>
        <name>Mg(2+)</name>
        <dbReference type="ChEBI" id="CHEBI:18420"/>
        <label>1</label>
        <note>catalytic</note>
    </ligand>
</feature>
<feature type="binding site" evidence="1">
    <location>
        <position position="502"/>
    </location>
    <ligand>
        <name>Mg(2+)</name>
        <dbReference type="ChEBI" id="CHEBI:18420"/>
        <label>2</label>
    </ligand>
</feature>
<feature type="binding site" evidence="1">
    <location>
        <position position="504"/>
    </location>
    <ligand>
        <name>Mg(2+)</name>
        <dbReference type="ChEBI" id="CHEBI:18420"/>
        <label>2</label>
    </ligand>
</feature>
<feature type="site" description="Interaction with DNA" evidence="1">
    <location>
        <position position="453"/>
    </location>
</feature>
<feature type="site" description="Interaction with DNA" evidence="1">
    <location>
        <position position="456"/>
    </location>
</feature>
<feature type="site" description="Interaction with DNA" evidence="1">
    <location>
        <position position="509"/>
    </location>
</feature>
<feature type="site" description="Interaction with DNA" evidence="1">
    <location>
        <position position="621"/>
    </location>
</feature>
<sequence length="635" mass="72413">MKNNYSEANIKILKGLDAVKKRPGMYIGSTDSRGFHHLLWEILDNCVDEVLSGFANTIAVVLHAENQITVSDNGRGIPFETHSDSKISTIDTVFTYLHAGGKFDNDSYKIAGGLHGVGASVVNALSDQLQVTVKRQGKVYRSVYENGGKIKQKAHCIGNAKIDEHGTSVTFRPDPKVFKKIHFDSELIRARLKELAFLFKKLQLTFVDETGSGEKEVFFTEAGISQYLDELNADSKQIAQKIFVSGTEDDIELEAVFQFIDGEDEKLLSFANSIRTSEGGSHEASFRQSVGDVINNYCRKYNFLKERDKNFEASEIREGLNGIIKVNLPEKIIAFEGQTKSKLFSKEVKAVVQKLTQKHFFQFLERNSVDAKLIVEKLFYNRKLRQELKQQRQIKKNLSNPKAERILFGKLAPAQSKKVAERELFVVEGDSAGGTAKMGRDRFLQAILPLRGKVLNVEKINNKKEAINNEELLTLIFCIGTGIGNNFTIRDRKYDKIIIMTDADNDGAHIQILLLTFFYRYMKPLIEKGHIYLALPPLYKFEGRDKKARYLWTEQELEQYRAKHSHFNVQRYKGLGEMNADQLWETTMNPMTRKLIQVKLDNFIQAEKQINVFMGDKTELRKSWIEANINFSSEN</sequence>
<evidence type="ECO:0000255" key="1">
    <source>
        <dbReference type="HAMAP-Rule" id="MF_00939"/>
    </source>
</evidence>
<dbReference type="EC" id="5.6.2.2" evidence="1"/>
<dbReference type="EMBL" id="U00089">
    <property type="protein sequence ID" value="AAB95680.1"/>
    <property type="molecule type" value="Genomic_DNA"/>
</dbReference>
<dbReference type="PIR" id="S73358">
    <property type="entry name" value="S73358"/>
</dbReference>
<dbReference type="RefSeq" id="NP_109810.1">
    <property type="nucleotide sequence ID" value="NC_000912.1"/>
</dbReference>
<dbReference type="RefSeq" id="WP_010874479.1">
    <property type="nucleotide sequence ID" value="NZ_OU342337.1"/>
</dbReference>
<dbReference type="SMR" id="P78016"/>
<dbReference type="IntAct" id="P78016">
    <property type="interactions" value="2"/>
</dbReference>
<dbReference type="STRING" id="272634.MPN_122"/>
<dbReference type="EnsemblBacteria" id="AAB95680">
    <property type="protein sequence ID" value="AAB95680"/>
    <property type="gene ID" value="MPN_122"/>
</dbReference>
<dbReference type="KEGG" id="mpn:MPN_122"/>
<dbReference type="PATRIC" id="fig|272634.6.peg.129"/>
<dbReference type="HOGENOM" id="CLU_006146_4_1_14"/>
<dbReference type="OrthoDB" id="9802808at2"/>
<dbReference type="BioCyc" id="MPNE272634:G1GJ3-203-MONOMER"/>
<dbReference type="Proteomes" id="UP000000808">
    <property type="component" value="Chromosome"/>
</dbReference>
<dbReference type="GO" id="GO:0005694">
    <property type="term" value="C:chromosome"/>
    <property type="evidence" value="ECO:0007669"/>
    <property type="project" value="InterPro"/>
</dbReference>
<dbReference type="GO" id="GO:0005524">
    <property type="term" value="F:ATP binding"/>
    <property type="evidence" value="ECO:0007669"/>
    <property type="project" value="UniProtKB-KW"/>
</dbReference>
<dbReference type="GO" id="GO:0003677">
    <property type="term" value="F:DNA binding"/>
    <property type="evidence" value="ECO:0007669"/>
    <property type="project" value="UniProtKB-KW"/>
</dbReference>
<dbReference type="GO" id="GO:0034335">
    <property type="term" value="F:DNA negative supercoiling activity"/>
    <property type="evidence" value="ECO:0007669"/>
    <property type="project" value="UniProtKB-ARBA"/>
</dbReference>
<dbReference type="GO" id="GO:0046872">
    <property type="term" value="F:metal ion binding"/>
    <property type="evidence" value="ECO:0007669"/>
    <property type="project" value="UniProtKB-KW"/>
</dbReference>
<dbReference type="GO" id="GO:0006265">
    <property type="term" value="P:DNA topological change"/>
    <property type="evidence" value="ECO:0007669"/>
    <property type="project" value="InterPro"/>
</dbReference>
<dbReference type="CDD" id="cd16928">
    <property type="entry name" value="HATPase_GyrB-like"/>
    <property type="match status" value="1"/>
</dbReference>
<dbReference type="CDD" id="cd00822">
    <property type="entry name" value="TopoII_Trans_DNA_gyrase"/>
    <property type="match status" value="1"/>
</dbReference>
<dbReference type="FunFam" id="3.30.565.10:FF:000002">
    <property type="entry name" value="DNA gyrase subunit B"/>
    <property type="match status" value="1"/>
</dbReference>
<dbReference type="Gene3D" id="3.30.230.10">
    <property type="match status" value="1"/>
</dbReference>
<dbReference type="Gene3D" id="3.40.50.670">
    <property type="match status" value="1"/>
</dbReference>
<dbReference type="Gene3D" id="3.30.565.10">
    <property type="entry name" value="Histidine kinase-like ATPase, C-terminal domain"/>
    <property type="match status" value="1"/>
</dbReference>
<dbReference type="HAMAP" id="MF_00939">
    <property type="entry name" value="ParE_type2"/>
    <property type="match status" value="1"/>
</dbReference>
<dbReference type="InterPro" id="IPR002288">
    <property type="entry name" value="DNA_gyrase_B_C"/>
</dbReference>
<dbReference type="InterPro" id="IPR036890">
    <property type="entry name" value="HATPase_C_sf"/>
</dbReference>
<dbReference type="InterPro" id="IPR005740">
    <property type="entry name" value="ParE_type2"/>
</dbReference>
<dbReference type="InterPro" id="IPR020568">
    <property type="entry name" value="Ribosomal_Su5_D2-typ_SF"/>
</dbReference>
<dbReference type="InterPro" id="IPR014721">
    <property type="entry name" value="Ribsml_uS5_D2-typ_fold_subgr"/>
</dbReference>
<dbReference type="InterPro" id="IPR001241">
    <property type="entry name" value="Topo_IIA"/>
</dbReference>
<dbReference type="InterPro" id="IPR013760">
    <property type="entry name" value="Topo_IIA-like_dom_sf"/>
</dbReference>
<dbReference type="InterPro" id="IPR000565">
    <property type="entry name" value="Topo_IIA_B"/>
</dbReference>
<dbReference type="InterPro" id="IPR013759">
    <property type="entry name" value="Topo_IIA_B_C"/>
</dbReference>
<dbReference type="InterPro" id="IPR013506">
    <property type="entry name" value="Topo_IIA_bsu_dom2"/>
</dbReference>
<dbReference type="InterPro" id="IPR018522">
    <property type="entry name" value="TopoIIA_CS"/>
</dbReference>
<dbReference type="InterPro" id="IPR006171">
    <property type="entry name" value="TOPRIM_dom"/>
</dbReference>
<dbReference type="NCBIfam" id="TIGR01058">
    <property type="entry name" value="parE_Gpos"/>
    <property type="match status" value="1"/>
</dbReference>
<dbReference type="NCBIfam" id="NF004189">
    <property type="entry name" value="PRK05644.1"/>
    <property type="match status" value="1"/>
</dbReference>
<dbReference type="PANTHER" id="PTHR45866">
    <property type="entry name" value="DNA GYRASE/TOPOISOMERASE SUBUNIT B"/>
    <property type="match status" value="1"/>
</dbReference>
<dbReference type="PANTHER" id="PTHR45866:SF12">
    <property type="entry name" value="DNA TOPOISOMERASE 4 SUBUNIT B"/>
    <property type="match status" value="1"/>
</dbReference>
<dbReference type="Pfam" id="PF00204">
    <property type="entry name" value="DNA_gyraseB"/>
    <property type="match status" value="1"/>
</dbReference>
<dbReference type="Pfam" id="PF00986">
    <property type="entry name" value="DNA_gyraseB_C"/>
    <property type="match status" value="1"/>
</dbReference>
<dbReference type="Pfam" id="PF02518">
    <property type="entry name" value="HATPase_c"/>
    <property type="match status" value="1"/>
</dbReference>
<dbReference type="Pfam" id="PF01751">
    <property type="entry name" value="Toprim"/>
    <property type="match status" value="1"/>
</dbReference>
<dbReference type="PRINTS" id="PR01159">
    <property type="entry name" value="DNAGYRASEB"/>
</dbReference>
<dbReference type="PRINTS" id="PR00418">
    <property type="entry name" value="TPI2FAMILY"/>
</dbReference>
<dbReference type="SMART" id="SM00387">
    <property type="entry name" value="HATPase_c"/>
    <property type="match status" value="1"/>
</dbReference>
<dbReference type="SMART" id="SM00433">
    <property type="entry name" value="TOP2c"/>
    <property type="match status" value="1"/>
</dbReference>
<dbReference type="SUPFAM" id="SSF55874">
    <property type="entry name" value="ATPase domain of HSP90 chaperone/DNA topoisomerase II/histidine kinase"/>
    <property type="match status" value="1"/>
</dbReference>
<dbReference type="SUPFAM" id="SSF54211">
    <property type="entry name" value="Ribosomal protein S5 domain 2-like"/>
    <property type="match status" value="1"/>
</dbReference>
<dbReference type="SUPFAM" id="SSF56719">
    <property type="entry name" value="Type II DNA topoisomerase"/>
    <property type="match status" value="1"/>
</dbReference>
<dbReference type="PROSITE" id="PS00177">
    <property type="entry name" value="TOPOISOMERASE_II"/>
    <property type="match status" value="1"/>
</dbReference>
<dbReference type="PROSITE" id="PS50880">
    <property type="entry name" value="TOPRIM"/>
    <property type="match status" value="1"/>
</dbReference>
<accession>P78016</accession>
<protein>
    <recommendedName>
        <fullName evidence="1">DNA topoisomerase 4 subunit B</fullName>
        <ecNumber evidence="1">5.6.2.2</ecNumber>
    </recommendedName>
    <alternativeName>
        <fullName evidence="1">Topoisomerase IV subunit B</fullName>
    </alternativeName>
</protein>
<comment type="function">
    <text evidence="1">Topoisomerase IV is essential for chromosome segregation. It relaxes supercoiled DNA. Performs the decatenation events required during the replication of a circular DNA molecule.</text>
</comment>
<comment type="catalytic activity">
    <reaction evidence="1">
        <text>ATP-dependent breakage, passage and rejoining of double-stranded DNA.</text>
        <dbReference type="EC" id="5.6.2.2"/>
    </reaction>
</comment>
<comment type="cofactor">
    <cofactor evidence="1">
        <name>Mg(2+)</name>
        <dbReference type="ChEBI" id="CHEBI:18420"/>
    </cofactor>
    <cofactor evidence="1">
        <name>Mn(2+)</name>
        <dbReference type="ChEBI" id="CHEBI:29035"/>
    </cofactor>
    <cofactor evidence="1">
        <name>Ca(2+)</name>
        <dbReference type="ChEBI" id="CHEBI:29108"/>
    </cofactor>
    <text evidence="1">Binds two Mg(2+) per subunit. The magnesium ions form salt bridges with both the protein and the DNA. Can also accept other divalent metal cations, such as Mn(2+) or Ca(2+).</text>
</comment>
<comment type="subunit">
    <text evidence="1">Heterotetramer composed of ParC and ParE.</text>
</comment>
<comment type="similarity">
    <text evidence="1">Belongs to the type II topoisomerase family. ParE type 2 subfamily.</text>
</comment>
<organism>
    <name type="scientific">Mycoplasma pneumoniae (strain ATCC 29342 / M129 / Subtype 1)</name>
    <name type="common">Mycoplasmoides pneumoniae</name>
    <dbReference type="NCBI Taxonomy" id="272634"/>
    <lineage>
        <taxon>Bacteria</taxon>
        <taxon>Bacillati</taxon>
        <taxon>Mycoplasmatota</taxon>
        <taxon>Mycoplasmoidales</taxon>
        <taxon>Mycoplasmoidaceae</taxon>
        <taxon>Mycoplasmoides</taxon>
    </lineage>
</organism>
<gene>
    <name evidence="1" type="primary">parE</name>
    <name type="ordered locus">MPN_122</name>
    <name type="ORF">MP032</name>
</gene>
<reference key="1">
    <citation type="journal article" date="1996" name="Nucleic Acids Res.">
        <title>Complete sequence analysis of the genome of the bacterium Mycoplasma pneumoniae.</title>
        <authorList>
            <person name="Himmelreich R."/>
            <person name="Hilbert H."/>
            <person name="Plagens H."/>
            <person name="Pirkl E."/>
            <person name="Li B.-C."/>
            <person name="Herrmann R."/>
        </authorList>
    </citation>
    <scope>NUCLEOTIDE SEQUENCE [LARGE SCALE GENOMIC DNA]</scope>
    <source>
        <strain>ATCC 29342 / M129 / Subtype 1</strain>
    </source>
</reference>
<name>PARE_MYCPN</name>
<keyword id="KW-0067">ATP-binding</keyword>
<keyword id="KW-0238">DNA-binding</keyword>
<keyword id="KW-0413">Isomerase</keyword>
<keyword id="KW-0460">Magnesium</keyword>
<keyword id="KW-0479">Metal-binding</keyword>
<keyword id="KW-0547">Nucleotide-binding</keyword>
<keyword id="KW-1185">Reference proteome</keyword>
<keyword id="KW-0799">Topoisomerase</keyword>